<evidence type="ECO:0000255" key="1">
    <source>
        <dbReference type="HAMAP-Rule" id="MF_00431"/>
    </source>
</evidence>
<dbReference type="EMBL" id="AJ428413">
    <property type="protein sequence ID" value="CAD28731.1"/>
    <property type="molecule type" value="Genomic_DNA"/>
</dbReference>
<dbReference type="RefSeq" id="NP_862764.1">
    <property type="nucleotide sequence ID" value="NC_004993.1"/>
</dbReference>
<dbReference type="SMR" id="Q7YJW3"/>
<dbReference type="GeneID" id="2598003"/>
<dbReference type="GO" id="GO:0009535">
    <property type="term" value="C:chloroplast thylakoid membrane"/>
    <property type="evidence" value="ECO:0007669"/>
    <property type="project" value="UniProtKB-SubCell"/>
</dbReference>
<dbReference type="GO" id="GO:0009522">
    <property type="term" value="C:photosystem I"/>
    <property type="evidence" value="ECO:0007669"/>
    <property type="project" value="UniProtKB-KW"/>
</dbReference>
<dbReference type="GO" id="GO:0015979">
    <property type="term" value="P:photosynthesis"/>
    <property type="evidence" value="ECO:0007669"/>
    <property type="project" value="UniProtKB-UniRule"/>
</dbReference>
<dbReference type="HAMAP" id="MF_00431">
    <property type="entry name" value="PSI_PsaI"/>
    <property type="match status" value="1"/>
</dbReference>
<dbReference type="InterPro" id="IPR001302">
    <property type="entry name" value="PSI_PsaI"/>
</dbReference>
<dbReference type="InterPro" id="IPR036357">
    <property type="entry name" value="PSI_PsaI_sf"/>
</dbReference>
<dbReference type="NCBIfam" id="TIGR03052">
    <property type="entry name" value="PS_I_psaI"/>
    <property type="match status" value="1"/>
</dbReference>
<dbReference type="PANTHER" id="PTHR35775">
    <property type="match status" value="1"/>
</dbReference>
<dbReference type="PANTHER" id="PTHR35775:SF2">
    <property type="entry name" value="PHOTOSYSTEM I REACTION CENTER SUBUNIT VIII"/>
    <property type="match status" value="1"/>
</dbReference>
<dbReference type="Pfam" id="PF00796">
    <property type="entry name" value="PSI_8"/>
    <property type="match status" value="1"/>
</dbReference>
<dbReference type="SUPFAM" id="SSF81540">
    <property type="entry name" value="Subunit VIII of photosystem I reaction centre, PsaI"/>
    <property type="match status" value="1"/>
</dbReference>
<proteinExistence type="inferred from homology"/>
<geneLocation type="chloroplast"/>
<reference key="1">
    <citation type="journal article" date="2003" name="Plant Syst. Evol.">
        <title>The chloroplast genome of the 'basal' angiosperm Calycanthus fertilis -- structural and phylogenetic analyses.</title>
        <authorList>
            <person name="Goremykin V."/>
            <person name="Hirsch-Ernst K.I."/>
            <person name="Woelfl S."/>
            <person name="Hellwig F.H."/>
        </authorList>
    </citation>
    <scope>NUCLEOTIDE SEQUENCE [LARGE SCALE GENOMIC DNA]</scope>
</reference>
<sequence>MTDLNLPSIFVPLVGLMFPAIAMASLSLHIQKNKII</sequence>
<name>PSAI_CALFG</name>
<comment type="function">
    <text evidence="1">May help in the organization of the PsaL subunit.</text>
</comment>
<comment type="subcellular location">
    <subcellularLocation>
        <location evidence="1">Plastid</location>
        <location evidence="1">Chloroplast thylakoid membrane</location>
        <topology evidence="1">Single-pass membrane protein</topology>
    </subcellularLocation>
</comment>
<comment type="similarity">
    <text evidence="1">Belongs to the PsaI family.</text>
</comment>
<organism>
    <name type="scientific">Calycanthus floridus var. glaucus</name>
    <name type="common">Eastern sweetshrub</name>
    <name type="synonym">Calycanthus fertilis var. ferax</name>
    <dbReference type="NCBI Taxonomy" id="212734"/>
    <lineage>
        <taxon>Eukaryota</taxon>
        <taxon>Viridiplantae</taxon>
        <taxon>Streptophyta</taxon>
        <taxon>Embryophyta</taxon>
        <taxon>Tracheophyta</taxon>
        <taxon>Spermatophyta</taxon>
        <taxon>Magnoliopsida</taxon>
        <taxon>Magnoliidae</taxon>
        <taxon>Laurales</taxon>
        <taxon>Calycanthaceae</taxon>
        <taxon>Calycanthus</taxon>
    </lineage>
</organism>
<gene>
    <name evidence="1" type="primary">psaI</name>
</gene>
<keyword id="KW-0150">Chloroplast</keyword>
<keyword id="KW-0472">Membrane</keyword>
<keyword id="KW-0602">Photosynthesis</keyword>
<keyword id="KW-0603">Photosystem I</keyword>
<keyword id="KW-0934">Plastid</keyword>
<keyword id="KW-0793">Thylakoid</keyword>
<keyword id="KW-0812">Transmembrane</keyword>
<keyword id="KW-1133">Transmembrane helix</keyword>
<feature type="chain" id="PRO_0000194646" description="Photosystem I reaction center subunit VIII">
    <location>
        <begin position="1"/>
        <end position="36"/>
    </location>
</feature>
<feature type="transmembrane region" description="Helical" evidence="1">
    <location>
        <begin position="6"/>
        <end position="28"/>
    </location>
</feature>
<accession>Q7YJW3</accession>
<protein>
    <recommendedName>
        <fullName evidence="1">Photosystem I reaction center subunit VIII</fullName>
        <shortName evidence="1">PSI-I</shortName>
    </recommendedName>
</protein>